<comment type="function">
    <text evidence="1">Transfers the 4'-phosphopantetheine moiety from coenzyme A to a Ser of acyl-carrier-protein.</text>
</comment>
<comment type="catalytic activity">
    <reaction evidence="1">
        <text>apo-[ACP] + CoA = holo-[ACP] + adenosine 3',5'-bisphosphate + H(+)</text>
        <dbReference type="Rhea" id="RHEA:12068"/>
        <dbReference type="Rhea" id="RHEA-COMP:9685"/>
        <dbReference type="Rhea" id="RHEA-COMP:9690"/>
        <dbReference type="ChEBI" id="CHEBI:15378"/>
        <dbReference type="ChEBI" id="CHEBI:29999"/>
        <dbReference type="ChEBI" id="CHEBI:57287"/>
        <dbReference type="ChEBI" id="CHEBI:58343"/>
        <dbReference type="ChEBI" id="CHEBI:64479"/>
        <dbReference type="EC" id="2.7.8.7"/>
    </reaction>
</comment>
<comment type="cofactor">
    <cofactor evidence="1">
        <name>Mg(2+)</name>
        <dbReference type="ChEBI" id="CHEBI:18420"/>
    </cofactor>
</comment>
<comment type="subcellular location">
    <subcellularLocation>
        <location evidence="1">Cytoplasm</location>
    </subcellularLocation>
</comment>
<comment type="similarity">
    <text evidence="1">Belongs to the P-Pant transferase superfamily. AcpS family.</text>
</comment>
<feature type="chain" id="PRO_1000118835" description="Holo-[acyl-carrier-protein] synthase">
    <location>
        <begin position="1"/>
        <end position="118"/>
    </location>
</feature>
<feature type="binding site" evidence="1">
    <location>
        <position position="8"/>
    </location>
    <ligand>
        <name>Mg(2+)</name>
        <dbReference type="ChEBI" id="CHEBI:18420"/>
    </ligand>
</feature>
<feature type="binding site" evidence="1">
    <location>
        <position position="60"/>
    </location>
    <ligand>
        <name>Mg(2+)</name>
        <dbReference type="ChEBI" id="CHEBI:18420"/>
    </ligand>
</feature>
<evidence type="ECO:0000255" key="1">
    <source>
        <dbReference type="HAMAP-Rule" id="MF_00101"/>
    </source>
</evidence>
<accession>C0R3N6</accession>
<sequence>MIHGIGTDIVYIPRVSRILQKYGEKFLNRIYTEKEIELSRKYNSQEMRARYFAKRFAAKEAFVKARGSGQGIIMKDIEIYNDVRGKPYLTVSKDFISKIHLSLSDDGDYATAFVVICV</sequence>
<dbReference type="EC" id="2.7.8.7" evidence="1"/>
<dbReference type="EMBL" id="CP001391">
    <property type="protein sequence ID" value="ACN95528.1"/>
    <property type="molecule type" value="Genomic_DNA"/>
</dbReference>
<dbReference type="RefSeq" id="WP_007549151.1">
    <property type="nucleotide sequence ID" value="NZ_MKIF01000040.1"/>
</dbReference>
<dbReference type="SMR" id="C0R3N6"/>
<dbReference type="STRING" id="66084.WRi_007810"/>
<dbReference type="KEGG" id="wri:WRi_007810"/>
<dbReference type="HOGENOM" id="CLU_089696_3_1_5"/>
<dbReference type="Proteomes" id="UP000001293">
    <property type="component" value="Chromosome"/>
</dbReference>
<dbReference type="GO" id="GO:0005737">
    <property type="term" value="C:cytoplasm"/>
    <property type="evidence" value="ECO:0007669"/>
    <property type="project" value="UniProtKB-SubCell"/>
</dbReference>
<dbReference type="GO" id="GO:0008897">
    <property type="term" value="F:holo-[acyl-carrier-protein] synthase activity"/>
    <property type="evidence" value="ECO:0007669"/>
    <property type="project" value="UniProtKB-UniRule"/>
</dbReference>
<dbReference type="GO" id="GO:0000287">
    <property type="term" value="F:magnesium ion binding"/>
    <property type="evidence" value="ECO:0007669"/>
    <property type="project" value="UniProtKB-UniRule"/>
</dbReference>
<dbReference type="GO" id="GO:0006633">
    <property type="term" value="P:fatty acid biosynthetic process"/>
    <property type="evidence" value="ECO:0007669"/>
    <property type="project" value="UniProtKB-UniRule"/>
</dbReference>
<dbReference type="Gene3D" id="3.90.470.20">
    <property type="entry name" value="4'-phosphopantetheinyl transferase domain"/>
    <property type="match status" value="1"/>
</dbReference>
<dbReference type="HAMAP" id="MF_00101">
    <property type="entry name" value="AcpS"/>
    <property type="match status" value="1"/>
</dbReference>
<dbReference type="InterPro" id="IPR008278">
    <property type="entry name" value="4-PPantetheinyl_Trfase_dom"/>
</dbReference>
<dbReference type="InterPro" id="IPR037143">
    <property type="entry name" value="4-PPantetheinyl_Trfase_dom_sf"/>
</dbReference>
<dbReference type="InterPro" id="IPR002582">
    <property type="entry name" value="ACPS"/>
</dbReference>
<dbReference type="InterPro" id="IPR004568">
    <property type="entry name" value="Ppantetheine-prot_Trfase_dom"/>
</dbReference>
<dbReference type="NCBIfam" id="TIGR00516">
    <property type="entry name" value="acpS"/>
    <property type="match status" value="1"/>
</dbReference>
<dbReference type="NCBIfam" id="TIGR00556">
    <property type="entry name" value="pantethn_trn"/>
    <property type="match status" value="1"/>
</dbReference>
<dbReference type="NCBIfam" id="NF011253">
    <property type="entry name" value="PRK14659.1"/>
    <property type="match status" value="1"/>
</dbReference>
<dbReference type="Pfam" id="PF01648">
    <property type="entry name" value="ACPS"/>
    <property type="match status" value="1"/>
</dbReference>
<dbReference type="SUPFAM" id="SSF56214">
    <property type="entry name" value="4'-phosphopantetheinyl transferase"/>
    <property type="match status" value="1"/>
</dbReference>
<name>ACPS_WOLWR</name>
<organism>
    <name type="scientific">Wolbachia sp. subsp. Drosophila simulans (strain wRi)</name>
    <dbReference type="NCBI Taxonomy" id="66084"/>
    <lineage>
        <taxon>Bacteria</taxon>
        <taxon>Pseudomonadati</taxon>
        <taxon>Pseudomonadota</taxon>
        <taxon>Alphaproteobacteria</taxon>
        <taxon>Rickettsiales</taxon>
        <taxon>Anaplasmataceae</taxon>
        <taxon>Wolbachieae</taxon>
        <taxon>Wolbachia</taxon>
    </lineage>
</organism>
<keyword id="KW-0963">Cytoplasm</keyword>
<keyword id="KW-0275">Fatty acid biosynthesis</keyword>
<keyword id="KW-0276">Fatty acid metabolism</keyword>
<keyword id="KW-0444">Lipid biosynthesis</keyword>
<keyword id="KW-0443">Lipid metabolism</keyword>
<keyword id="KW-0460">Magnesium</keyword>
<keyword id="KW-0479">Metal-binding</keyword>
<keyword id="KW-0808">Transferase</keyword>
<protein>
    <recommendedName>
        <fullName evidence="1">Holo-[acyl-carrier-protein] synthase</fullName>
        <shortName evidence="1">Holo-ACP synthase</shortName>
        <ecNumber evidence="1">2.7.8.7</ecNumber>
    </recommendedName>
    <alternativeName>
        <fullName evidence="1">4'-phosphopantetheinyl transferase AcpS</fullName>
    </alternativeName>
</protein>
<gene>
    <name evidence="1" type="primary">acpS</name>
    <name type="ordered locus">WRi_007810</name>
</gene>
<reference key="1">
    <citation type="journal article" date="2009" name="Proc. Natl. Acad. Sci. U.S.A.">
        <title>The mosaic genome structure of the Wolbachia wRi strain infecting Drosophila simulans.</title>
        <authorList>
            <person name="Klasson L."/>
            <person name="Westberg J."/>
            <person name="Sapountzis P."/>
            <person name="Naeslund K."/>
            <person name="Lutnaes Y."/>
            <person name="Darby A.C."/>
            <person name="Veneti Z."/>
            <person name="Chen L."/>
            <person name="Braig H.R."/>
            <person name="Garrett R."/>
            <person name="Bourtzis K."/>
            <person name="Andersson S.G."/>
        </authorList>
    </citation>
    <scope>NUCLEOTIDE SEQUENCE [LARGE SCALE GENOMIC DNA]</scope>
    <source>
        <strain>wRi</strain>
    </source>
</reference>
<proteinExistence type="inferred from homology"/>